<organism>
    <name type="scientific">Chlorobaculum tepidum (strain ATCC 49652 / DSM 12025 / NBRC 103806 / TLS)</name>
    <name type="common">Chlorobium tepidum</name>
    <dbReference type="NCBI Taxonomy" id="194439"/>
    <lineage>
        <taxon>Bacteria</taxon>
        <taxon>Pseudomonadati</taxon>
        <taxon>Chlorobiota</taxon>
        <taxon>Chlorobiia</taxon>
        <taxon>Chlorobiales</taxon>
        <taxon>Chlorobiaceae</taxon>
        <taxon>Chlorobaculum</taxon>
    </lineage>
</organism>
<comment type="function">
    <text evidence="1">Protein S19 forms a complex with S13 that binds strongly to the 16S ribosomal RNA.</text>
</comment>
<comment type="similarity">
    <text evidence="1">Belongs to the universal ribosomal protein uS19 family.</text>
</comment>
<feature type="chain" id="PRO_0000129804" description="Small ribosomal subunit protein uS19">
    <location>
        <begin position="1"/>
        <end position="98"/>
    </location>
</feature>
<keyword id="KW-1185">Reference proteome</keyword>
<keyword id="KW-0687">Ribonucleoprotein</keyword>
<keyword id="KW-0689">Ribosomal protein</keyword>
<keyword id="KW-0694">RNA-binding</keyword>
<keyword id="KW-0699">rRNA-binding</keyword>
<reference key="1">
    <citation type="journal article" date="2002" name="Proc. Natl. Acad. Sci. U.S.A.">
        <title>The complete genome sequence of Chlorobium tepidum TLS, a photosynthetic, anaerobic, green-sulfur bacterium.</title>
        <authorList>
            <person name="Eisen J.A."/>
            <person name="Nelson K.E."/>
            <person name="Paulsen I.T."/>
            <person name="Heidelberg J.F."/>
            <person name="Wu M."/>
            <person name="Dodson R.J."/>
            <person name="DeBoy R.T."/>
            <person name="Gwinn M.L."/>
            <person name="Nelson W.C."/>
            <person name="Haft D.H."/>
            <person name="Hickey E.K."/>
            <person name="Peterson J.D."/>
            <person name="Durkin A.S."/>
            <person name="Kolonay J.F."/>
            <person name="Yang F."/>
            <person name="Holt I.E."/>
            <person name="Umayam L.A."/>
            <person name="Mason T.M."/>
            <person name="Brenner M."/>
            <person name="Shea T.P."/>
            <person name="Parksey D.S."/>
            <person name="Nierman W.C."/>
            <person name="Feldblyum T.V."/>
            <person name="Hansen C.L."/>
            <person name="Craven M.B."/>
            <person name="Radune D."/>
            <person name="Vamathevan J.J."/>
            <person name="Khouri H.M."/>
            <person name="White O."/>
            <person name="Gruber T.M."/>
            <person name="Ketchum K.A."/>
            <person name="Venter J.C."/>
            <person name="Tettelin H."/>
            <person name="Bryant D.A."/>
            <person name="Fraser C.M."/>
        </authorList>
    </citation>
    <scope>NUCLEOTIDE SEQUENCE [LARGE SCALE GENOMIC DNA]</scope>
    <source>
        <strain>ATCC 49652 / DSM 12025 / NBRC 103806 / TLS</strain>
    </source>
</reference>
<proteinExistence type="inferred from homology"/>
<sequence>MPRSLKKGPFIEFKLEKRILDMNSKGEKKVVKTWSRSSMISPDFVGHTVAVHNGKTHVPVYVTENMVGHKLGEFAPTRLFRGHAGGKAEKGGSAPRKK</sequence>
<accession>Q8KAH6</accession>
<gene>
    <name evidence="1" type="primary">rpsS</name>
    <name type="ordered locus">CT2185</name>
</gene>
<evidence type="ECO:0000255" key="1">
    <source>
        <dbReference type="HAMAP-Rule" id="MF_00531"/>
    </source>
</evidence>
<evidence type="ECO:0000305" key="2"/>
<dbReference type="EMBL" id="AE006470">
    <property type="protein sequence ID" value="AAM73401.1"/>
    <property type="molecule type" value="Genomic_DNA"/>
</dbReference>
<dbReference type="RefSeq" id="NP_663059.1">
    <property type="nucleotide sequence ID" value="NC_002932.3"/>
</dbReference>
<dbReference type="RefSeq" id="WP_010933838.1">
    <property type="nucleotide sequence ID" value="NC_002932.3"/>
</dbReference>
<dbReference type="SMR" id="Q8KAH6"/>
<dbReference type="STRING" id="194439.CT2185"/>
<dbReference type="EnsemblBacteria" id="AAM73401">
    <property type="protein sequence ID" value="AAM73401"/>
    <property type="gene ID" value="CT2185"/>
</dbReference>
<dbReference type="KEGG" id="cte:CT2185"/>
<dbReference type="PATRIC" id="fig|194439.7.peg.1984"/>
<dbReference type="eggNOG" id="COG0185">
    <property type="taxonomic scope" value="Bacteria"/>
</dbReference>
<dbReference type="HOGENOM" id="CLU_144911_0_1_10"/>
<dbReference type="OrthoDB" id="9797833at2"/>
<dbReference type="Proteomes" id="UP000001007">
    <property type="component" value="Chromosome"/>
</dbReference>
<dbReference type="GO" id="GO:0005737">
    <property type="term" value="C:cytoplasm"/>
    <property type="evidence" value="ECO:0007669"/>
    <property type="project" value="UniProtKB-ARBA"/>
</dbReference>
<dbReference type="GO" id="GO:0015935">
    <property type="term" value="C:small ribosomal subunit"/>
    <property type="evidence" value="ECO:0007669"/>
    <property type="project" value="InterPro"/>
</dbReference>
<dbReference type="GO" id="GO:0019843">
    <property type="term" value="F:rRNA binding"/>
    <property type="evidence" value="ECO:0007669"/>
    <property type="project" value="UniProtKB-UniRule"/>
</dbReference>
<dbReference type="GO" id="GO:0003735">
    <property type="term" value="F:structural constituent of ribosome"/>
    <property type="evidence" value="ECO:0007669"/>
    <property type="project" value="InterPro"/>
</dbReference>
<dbReference type="GO" id="GO:0000028">
    <property type="term" value="P:ribosomal small subunit assembly"/>
    <property type="evidence" value="ECO:0007669"/>
    <property type="project" value="TreeGrafter"/>
</dbReference>
<dbReference type="GO" id="GO:0006412">
    <property type="term" value="P:translation"/>
    <property type="evidence" value="ECO:0007669"/>
    <property type="project" value="UniProtKB-UniRule"/>
</dbReference>
<dbReference type="FunFam" id="3.30.860.10:FF:000001">
    <property type="entry name" value="30S ribosomal protein S19"/>
    <property type="match status" value="1"/>
</dbReference>
<dbReference type="Gene3D" id="3.30.860.10">
    <property type="entry name" value="30s Ribosomal Protein S19, Chain A"/>
    <property type="match status" value="1"/>
</dbReference>
<dbReference type="HAMAP" id="MF_00531">
    <property type="entry name" value="Ribosomal_uS19"/>
    <property type="match status" value="1"/>
</dbReference>
<dbReference type="InterPro" id="IPR002222">
    <property type="entry name" value="Ribosomal_uS19"/>
</dbReference>
<dbReference type="InterPro" id="IPR005732">
    <property type="entry name" value="Ribosomal_uS19_bac-type"/>
</dbReference>
<dbReference type="InterPro" id="IPR020934">
    <property type="entry name" value="Ribosomal_uS19_CS"/>
</dbReference>
<dbReference type="InterPro" id="IPR023575">
    <property type="entry name" value="Ribosomal_uS19_SF"/>
</dbReference>
<dbReference type="NCBIfam" id="TIGR01050">
    <property type="entry name" value="rpsS_bact"/>
    <property type="match status" value="1"/>
</dbReference>
<dbReference type="PANTHER" id="PTHR11880">
    <property type="entry name" value="RIBOSOMAL PROTEIN S19P FAMILY MEMBER"/>
    <property type="match status" value="1"/>
</dbReference>
<dbReference type="PANTHER" id="PTHR11880:SF8">
    <property type="entry name" value="SMALL RIBOSOMAL SUBUNIT PROTEIN US19M"/>
    <property type="match status" value="1"/>
</dbReference>
<dbReference type="Pfam" id="PF00203">
    <property type="entry name" value="Ribosomal_S19"/>
    <property type="match status" value="1"/>
</dbReference>
<dbReference type="PIRSF" id="PIRSF002144">
    <property type="entry name" value="Ribosomal_S19"/>
    <property type="match status" value="1"/>
</dbReference>
<dbReference type="PRINTS" id="PR00975">
    <property type="entry name" value="RIBOSOMALS19"/>
</dbReference>
<dbReference type="SUPFAM" id="SSF54570">
    <property type="entry name" value="Ribosomal protein S19"/>
    <property type="match status" value="1"/>
</dbReference>
<dbReference type="PROSITE" id="PS00323">
    <property type="entry name" value="RIBOSOMAL_S19"/>
    <property type="match status" value="1"/>
</dbReference>
<protein>
    <recommendedName>
        <fullName evidence="1">Small ribosomal subunit protein uS19</fullName>
    </recommendedName>
    <alternativeName>
        <fullName evidence="2">30S ribosomal protein S19</fullName>
    </alternativeName>
</protein>
<name>RS19_CHLTE</name>